<sequence length="240" mass="25987">MFSSHASLPIHSRRLAAGLDSRWQQPQIQAIAGSQAIVPTVVEQSGRGERAFDIYSRLLRERIVFLGTGVDDAVADSIVAQLLFLEAEDPEKDIQLYINSPGGSVTAGMAIYDTMQQVAPDVATICFGLAASMGAFLLSGGAQGKRMALPSARIMIHQPLGGAQGQAVDIEIQAREILYHKSTLNDLLAQHTGQPLEKIEVDTDRDFFMSPEEAKAYGLIDQVLTRPTMAITDHNDAVLQ</sequence>
<accession>O34125</accession>
<accession>Q31K64</accession>
<accession>Q8GIU2</accession>
<name>CLPP2_SYNE7</name>
<comment type="function">
    <text evidence="1">Cleaves peptides in various proteins in a process that requires ATP hydrolysis. Has a chymotrypsin-like activity. Plays a major role in the degradation of misfolded proteins.</text>
</comment>
<comment type="catalytic activity">
    <reaction evidence="1">
        <text>Hydrolysis of proteins to small peptides in the presence of ATP and magnesium. alpha-casein is the usual test substrate. In the absence of ATP, only oligopeptides shorter than five residues are hydrolyzed (such as succinyl-Leu-Tyr-|-NHMec, and Leu-Tyr-Leu-|-Tyr-Trp, in which cleavage of the -Tyr-|-Leu- and -Tyr-|-Trp bonds also occurs).</text>
        <dbReference type="EC" id="3.4.21.92"/>
    </reaction>
</comment>
<comment type="subunit">
    <text evidence="1">Fourteen ClpP subunits assemble into 2 heptameric rings which stack back to back to give a disk-like structure with a central cavity, resembling the structure of eukaryotic proteasomes.</text>
</comment>
<comment type="subcellular location">
    <subcellularLocation>
        <location evidence="1">Cytoplasm</location>
    </subcellularLocation>
</comment>
<comment type="similarity">
    <text evidence="1">Belongs to the peptidase S14 family.</text>
</comment>
<comment type="sequence caution" evidence="2">
    <conflict type="erroneous initiation">
        <sequence resource="EMBL-CDS" id="ABB58555"/>
    </conflict>
</comment>
<proteinExistence type="inferred from homology"/>
<keyword id="KW-0963">Cytoplasm</keyword>
<keyword id="KW-0378">Hydrolase</keyword>
<keyword id="KW-0645">Protease</keyword>
<keyword id="KW-1185">Reference proteome</keyword>
<keyword id="KW-0720">Serine protease</keyword>
<dbReference type="EC" id="3.4.21.92" evidence="1"/>
<dbReference type="EMBL" id="U92039">
    <property type="protein sequence ID" value="AAB68677.1"/>
    <property type="molecule type" value="Genomic_DNA"/>
</dbReference>
<dbReference type="EMBL" id="U30252">
    <property type="protein sequence ID" value="AAL03914.1"/>
    <property type="molecule type" value="Genomic_DNA"/>
</dbReference>
<dbReference type="EMBL" id="CP000100">
    <property type="protein sequence ID" value="ABB58555.1"/>
    <property type="status" value="ALT_INIT"/>
    <property type="molecule type" value="Genomic_DNA"/>
</dbReference>
<dbReference type="SMR" id="O34125"/>
<dbReference type="STRING" id="1140.Synpcc7942_2525"/>
<dbReference type="MEROPS" id="S14.001"/>
<dbReference type="PaxDb" id="1140-Synpcc7942_2525"/>
<dbReference type="KEGG" id="syf:Synpcc7942_2525"/>
<dbReference type="eggNOG" id="COG0740">
    <property type="taxonomic scope" value="Bacteria"/>
</dbReference>
<dbReference type="HOGENOM" id="CLU_058707_3_2_3"/>
<dbReference type="OrthoDB" id="571524at2"/>
<dbReference type="BioCyc" id="MetaCyc:SYNPCC7942_2525-MONOMER"/>
<dbReference type="BioCyc" id="SYNEL:SYNPCC7942_2525-MONOMER"/>
<dbReference type="BRENDA" id="3.4.21.92">
    <property type="organism ID" value="6187"/>
</dbReference>
<dbReference type="Proteomes" id="UP000889800">
    <property type="component" value="Chromosome"/>
</dbReference>
<dbReference type="GO" id="GO:0005737">
    <property type="term" value="C:cytoplasm"/>
    <property type="evidence" value="ECO:0007669"/>
    <property type="project" value="UniProtKB-SubCell"/>
</dbReference>
<dbReference type="GO" id="GO:0009368">
    <property type="term" value="C:endopeptidase Clp complex"/>
    <property type="evidence" value="ECO:0007669"/>
    <property type="project" value="TreeGrafter"/>
</dbReference>
<dbReference type="GO" id="GO:0004176">
    <property type="term" value="F:ATP-dependent peptidase activity"/>
    <property type="evidence" value="ECO:0007669"/>
    <property type="project" value="InterPro"/>
</dbReference>
<dbReference type="GO" id="GO:0051117">
    <property type="term" value="F:ATPase binding"/>
    <property type="evidence" value="ECO:0007669"/>
    <property type="project" value="TreeGrafter"/>
</dbReference>
<dbReference type="GO" id="GO:0004252">
    <property type="term" value="F:serine-type endopeptidase activity"/>
    <property type="evidence" value="ECO:0007669"/>
    <property type="project" value="UniProtKB-UniRule"/>
</dbReference>
<dbReference type="GO" id="GO:0006515">
    <property type="term" value="P:protein quality control for misfolded or incompletely synthesized proteins"/>
    <property type="evidence" value="ECO:0007669"/>
    <property type="project" value="TreeGrafter"/>
</dbReference>
<dbReference type="CDD" id="cd07017">
    <property type="entry name" value="S14_ClpP_2"/>
    <property type="match status" value="1"/>
</dbReference>
<dbReference type="FunFam" id="3.90.226.10:FF:000001">
    <property type="entry name" value="ATP-dependent Clp protease proteolytic subunit"/>
    <property type="match status" value="1"/>
</dbReference>
<dbReference type="Gene3D" id="3.90.226.10">
    <property type="entry name" value="2-enoyl-CoA Hydratase, Chain A, domain 1"/>
    <property type="match status" value="1"/>
</dbReference>
<dbReference type="HAMAP" id="MF_00444">
    <property type="entry name" value="ClpP"/>
    <property type="match status" value="1"/>
</dbReference>
<dbReference type="InterPro" id="IPR001907">
    <property type="entry name" value="ClpP"/>
</dbReference>
<dbReference type="InterPro" id="IPR029045">
    <property type="entry name" value="ClpP/crotonase-like_dom_sf"/>
</dbReference>
<dbReference type="InterPro" id="IPR023562">
    <property type="entry name" value="ClpP/TepA"/>
</dbReference>
<dbReference type="InterPro" id="IPR033135">
    <property type="entry name" value="ClpP_His_AS"/>
</dbReference>
<dbReference type="InterPro" id="IPR018215">
    <property type="entry name" value="ClpP_Ser_AS"/>
</dbReference>
<dbReference type="NCBIfam" id="TIGR00493">
    <property type="entry name" value="clpP"/>
    <property type="match status" value="1"/>
</dbReference>
<dbReference type="NCBIfam" id="NF001368">
    <property type="entry name" value="PRK00277.1"/>
    <property type="match status" value="1"/>
</dbReference>
<dbReference type="NCBIfam" id="NF009205">
    <property type="entry name" value="PRK12553.1"/>
    <property type="match status" value="1"/>
</dbReference>
<dbReference type="PANTHER" id="PTHR10381">
    <property type="entry name" value="ATP-DEPENDENT CLP PROTEASE PROTEOLYTIC SUBUNIT"/>
    <property type="match status" value="1"/>
</dbReference>
<dbReference type="PANTHER" id="PTHR10381:SF70">
    <property type="entry name" value="ATP-DEPENDENT CLP PROTEASE PROTEOLYTIC SUBUNIT"/>
    <property type="match status" value="1"/>
</dbReference>
<dbReference type="Pfam" id="PF00574">
    <property type="entry name" value="CLP_protease"/>
    <property type="match status" value="1"/>
</dbReference>
<dbReference type="PRINTS" id="PR00127">
    <property type="entry name" value="CLPPROTEASEP"/>
</dbReference>
<dbReference type="SUPFAM" id="SSF52096">
    <property type="entry name" value="ClpP/crotonase"/>
    <property type="match status" value="1"/>
</dbReference>
<dbReference type="PROSITE" id="PS00382">
    <property type="entry name" value="CLP_PROTEASE_HIS"/>
    <property type="match status" value="1"/>
</dbReference>
<dbReference type="PROSITE" id="PS00381">
    <property type="entry name" value="CLP_PROTEASE_SER"/>
    <property type="match status" value="1"/>
</dbReference>
<organism>
    <name type="scientific">Synechococcus elongatus (strain ATCC 33912 / PCC 7942 / FACHB-805)</name>
    <name type="common">Anacystis nidulans R2</name>
    <dbReference type="NCBI Taxonomy" id="1140"/>
    <lineage>
        <taxon>Bacteria</taxon>
        <taxon>Bacillati</taxon>
        <taxon>Cyanobacteriota</taxon>
        <taxon>Cyanophyceae</taxon>
        <taxon>Synechococcales</taxon>
        <taxon>Synechococcaceae</taxon>
        <taxon>Synechococcus</taxon>
    </lineage>
</organism>
<gene>
    <name evidence="1" type="primary">clpP2</name>
    <name type="ordered locus">Synpcc7942_2525</name>
    <name type="ORF">seb0002</name>
</gene>
<evidence type="ECO:0000255" key="1">
    <source>
        <dbReference type="HAMAP-Rule" id="MF_00444"/>
    </source>
</evidence>
<evidence type="ECO:0000305" key="2"/>
<protein>
    <recommendedName>
        <fullName evidence="1">ATP-dependent Clp protease proteolytic subunit 2</fullName>
        <ecNumber evidence="1">3.4.21.92</ecNumber>
    </recommendedName>
    <alternativeName>
        <fullName evidence="1">Endopeptidase Clp 2</fullName>
    </alternativeName>
</protein>
<feature type="chain" id="PRO_0000179687" description="ATP-dependent Clp protease proteolytic subunit 2">
    <location>
        <begin position="1"/>
        <end position="240"/>
    </location>
</feature>
<feature type="active site" description="Nucleophile" evidence="1">
    <location>
        <position position="132"/>
    </location>
</feature>
<feature type="active site" evidence="1">
    <location>
        <position position="157"/>
    </location>
</feature>
<reference key="1">
    <citation type="journal article" date="2002" name="Microbiology">
        <title>The clpP multigene family for the ATP-dependent Clp protease in the cyanobacterium Synechococcus.</title>
        <authorList>
            <person name="Schelin J."/>
            <person name="Lindmark F."/>
            <person name="Clarke A.K."/>
        </authorList>
    </citation>
    <scope>NUCLEOTIDE SEQUENCE [GENOMIC DNA]</scope>
</reference>
<reference key="2">
    <citation type="submission" date="2002-11" db="EMBL/GenBank/DDBJ databases">
        <title>Synechococcus elongatus PCC7942 genome sequence, cosmid 7H1 and 2E8.</title>
        <authorList>
            <person name="Holtman C.K."/>
            <person name="Socias T."/>
            <person name="Mohler B.J."/>
            <person name="Chen Y."/>
            <person name="Min H."/>
            <person name="Golden S.S."/>
            <person name="Youderian P."/>
            <person name="Sandoval P."/>
            <person name="Gonzalez A."/>
            <person name="Salinas I."/>
        </authorList>
    </citation>
    <scope>NUCLEOTIDE SEQUENCE [GENOMIC DNA]</scope>
</reference>
<reference key="3">
    <citation type="submission" date="2005-08" db="EMBL/GenBank/DDBJ databases">
        <title>Complete sequence of chromosome 1 of Synechococcus elongatus PCC 7942.</title>
        <authorList>
            <consortium name="US DOE Joint Genome Institute"/>
            <person name="Copeland A."/>
            <person name="Lucas S."/>
            <person name="Lapidus A."/>
            <person name="Barry K."/>
            <person name="Detter J.C."/>
            <person name="Glavina T."/>
            <person name="Hammon N."/>
            <person name="Israni S."/>
            <person name="Pitluck S."/>
            <person name="Schmutz J."/>
            <person name="Larimer F."/>
            <person name="Land M."/>
            <person name="Kyrpides N."/>
            <person name="Lykidis A."/>
            <person name="Golden S."/>
            <person name="Richardson P."/>
        </authorList>
    </citation>
    <scope>NUCLEOTIDE SEQUENCE [LARGE SCALE GENOMIC DNA]</scope>
    <source>
        <strain>ATCC 33912 / PCC 7942 / FACHB-805</strain>
    </source>
</reference>